<comment type="function">
    <text evidence="2 3 4 5 8 9 10 11 13 14 17 18 19 21 22 23">Cysteine protease that plays a key role in cytoplasm to vacuole transport (Cvt) and autophagy by mediating both proteolytic activation and delipidation of ATG8 (PubMed:11038174, PubMed:11100732, PubMed:11149920, PubMed:11904149, PubMed:16680092, PubMed:18701704, PubMed:18725539, PubMed:28330855, PubMed:28704456, PubMed:28821724, PubMed:8050581, PubMed:8224160, PubMed:9649430). Required for selective autophagic degradation of the nucleus (nucleophagy) as well as for mitophagy which contributes to regulate mitochondrial quantity and quality by eliminating the mitochondria to a basal level to fulfill cellular energy requirements and preventing excess ROS production (PubMed:11038174, PubMed:11100732, PubMed:11149920, PubMed:11904149, PubMed:16680092, PubMed:18701704, PubMed:18725539, PubMed:8050581, PubMed:8224160, PubMed:9649430). The protease activity is required for proteolytic activation of ATG8: cleaves the C-terminal amino acid of ATG8 to reveal a C-terminal glycine (PubMed:11038174, PubMed:11100732, PubMed:11149920, PubMed:11904149, PubMed:16680092, PubMed:18701704, PubMed:18725539, PubMed:8050581, PubMed:8224160, PubMed:9649430). ATG8 ubiquitin-like activity requires the exposure of the glycine at the C-terminus for its conjugation to phosphatidylethanolamine (PE) and its insertion to membranes, which is necessary for autophagy (PubMed:11038174, PubMed:11100732, PubMed:11149920, PubMed:11904149, PubMed:16680092, PubMed:18701704, PubMed:18725539, PubMed:8050581, PubMed:8224160, PubMed:9649430). The ATG8-PE conjugate mediates tethering between adjacent membranes and stimulates membrane hemifusion, leading to expansion of the autophagosomal membrane during autophagy (PubMed:17632063). In addition to the protease activity, also catalyzes deconjugation of PE-conjugated forms of ATG8 during macroautophagy: ATG8 delipidation is required to release the protein from membranes, which facilitates multiple events during macroautophagy, and especially for efficient autophagosome biogenesis, the assembly of ATG9-containing tubulovesicular clusters into phagophores/autophagosomes, and for the disassembly of PAS-associated ATG components (PubMed:22240591, PubMed:22652539, PubMed:28330855, PubMed:28704456, PubMed:28821724). ATG8 delipidation by ATG4 also recycles ATG8-PE generated on inappropriate membranes to maintain a reservoir of unlipidated ATG8 that is required for autophagosome formation at the PAS (PubMed:22240591, PubMed:22652539).</text>
</comment>
<comment type="catalytic activity">
    <reaction evidence="13 14">
        <text>[protein]-C-terminal L-amino acid-glycyl-phosphatidylethanolamide + H2O = [protein]-C-terminal L-amino acid-glycine + a 1,2-diacyl-sn-glycero-3-phosphoethanolamine</text>
        <dbReference type="Rhea" id="RHEA:67548"/>
        <dbReference type="Rhea" id="RHEA-COMP:17323"/>
        <dbReference type="Rhea" id="RHEA-COMP:17324"/>
        <dbReference type="ChEBI" id="CHEBI:15377"/>
        <dbReference type="ChEBI" id="CHEBI:64612"/>
        <dbReference type="ChEBI" id="CHEBI:172940"/>
        <dbReference type="ChEBI" id="CHEBI:172941"/>
    </reaction>
    <physiologicalReaction direction="left-to-right" evidence="13 14">
        <dbReference type="Rhea" id="RHEA:67549"/>
    </physiologicalReaction>
</comment>
<comment type="activity regulation">
    <text evidence="2">Inhibited by N-ethylmaleimide.</text>
</comment>
<comment type="subunit">
    <text evidence="8 16 17 19 23">Interacts with ATG8 (PubMed:16680092, PubMed:28287329, PubMed:28330855, PubMed:28821724, PubMed:9649430). Interacts with TUB1 and TUB2 (PubMed:9649430).</text>
</comment>
<comment type="interaction">
    <interactant intactId="EBI-29160">
        <id>P53867</id>
    </interactant>
    <interactant intactId="EBI-2684">
        <id>P38182</id>
        <label>ATG8</label>
    </interactant>
    <organismsDiffer>false</organismsDiffer>
    <experiments>3</experiments>
</comment>
<comment type="subcellular location">
    <subcellularLocation>
        <location evidence="4">Cytoplasm</location>
    </subcellularLocation>
    <subcellularLocation>
        <location evidence="6">Nucleus</location>
    </subcellularLocation>
    <subcellularLocation>
        <location evidence="15 17 19">Preautophagosomal structure</location>
    </subcellularLocation>
    <subcellularLocation>
        <location evidence="20">Mitochondrion</location>
    </subcellularLocation>
    <text evidence="20">Associates with mitochondria following nitrogen starvation in a respiratory carbon source.</text>
</comment>
<comment type="induction">
    <text evidence="12">Expression is induced upon starvation, through the action of transcription factors GCN2 and GCN4.</text>
</comment>
<comment type="domain">
    <text evidence="16 17">The APEAR motif (ATG8-PE association region) plays a key role in ATG4 recruitment to autophagosomal membranes and ATG8 deconjugation (PubMed:28330855). The LIR (LC3-interacting region act cooperatively) and APEAR motifs for the interaction with ATG8 (PubMed:28287329, PubMed:28330855).</text>
</comment>
<comment type="PTM">
    <text evidence="19">Phosphorylation at Ser-307 by ATG1 inhibits autophagy: it takes place on autophagosome membranes and decreases its interaction with ATG8, thereby impairing deconjugation of PE-conjugated forms of ATG8.</text>
</comment>
<comment type="PTM">
    <text evidence="15">Formation of a disulfide bond between Cys-338 and Cys-394 leads to reduced autophagy (PubMed:25483965). The disulfide bond is reduced by thioredoxin (PubMed:25483965).</text>
</comment>
<comment type="miscellaneous">
    <text evidence="7">Present with 3300 molecules/cell in log phase SD medium.</text>
</comment>
<comment type="similarity">
    <text evidence="27">Belongs to the peptidase C54 family.</text>
</comment>
<comment type="sequence caution" evidence="27">
    <conflict type="erroneous initiation">
        <sequence resource="EMBL-CDS" id="CAA93375"/>
    </conflict>
    <text>Extended N-terminus.</text>
</comment>
<comment type="sequence caution" evidence="27">
    <conflict type="erroneous initiation">
        <sequence resource="EMBL-CDS" id="CAA96126"/>
    </conflict>
    <text>Extended N-terminus.</text>
</comment>
<reference key="1">
    <citation type="journal article" date="1996" name="Yeast">
        <title>The DNA sequence of cosmid 14-5 from chromosome XIV reveals 21 open reading frames including a novel gene encoding a globin-like domain.</title>
        <authorList>
            <person name="Pandolfo D."/>
            <person name="de Antoni A."/>
            <person name="Lanfranchi G."/>
            <person name="Valle G."/>
        </authorList>
    </citation>
    <scope>NUCLEOTIDE SEQUENCE [GENOMIC DNA]</scope>
</reference>
<reference key="2">
    <citation type="journal article" date="1997" name="Nature">
        <title>The nucleotide sequence of Saccharomyces cerevisiae chromosome XIV and its evolutionary implications.</title>
        <authorList>
            <person name="Philippsen P."/>
            <person name="Kleine K."/>
            <person name="Poehlmann R."/>
            <person name="Duesterhoeft A."/>
            <person name="Hamberg K."/>
            <person name="Hegemann J.H."/>
            <person name="Obermaier B."/>
            <person name="Urrestarazu L.A."/>
            <person name="Aert R."/>
            <person name="Albermann K."/>
            <person name="Altmann R."/>
            <person name="Andre B."/>
            <person name="Baladron V."/>
            <person name="Ballesta J.P.G."/>
            <person name="Becam A.-M."/>
            <person name="Beinhauer J.D."/>
            <person name="Boskovic J."/>
            <person name="Buitrago M.J."/>
            <person name="Bussereau F."/>
            <person name="Coster F."/>
            <person name="Crouzet M."/>
            <person name="D'Angelo M."/>
            <person name="Dal Pero F."/>
            <person name="De Antoni A."/>
            <person name="del Rey F."/>
            <person name="Doignon F."/>
            <person name="Domdey H."/>
            <person name="Dubois E."/>
            <person name="Fiedler T.A."/>
            <person name="Fleig U."/>
            <person name="Floeth M."/>
            <person name="Fritz C."/>
            <person name="Gaillardin C."/>
            <person name="Garcia-Cantalejo J.M."/>
            <person name="Glansdorff N."/>
            <person name="Goffeau A."/>
            <person name="Gueldener U."/>
            <person name="Herbert C.J."/>
            <person name="Heumann K."/>
            <person name="Heuss-Neitzel D."/>
            <person name="Hilbert H."/>
            <person name="Hinni K."/>
            <person name="Iraqui Houssaini I."/>
            <person name="Jacquet M."/>
            <person name="Jimenez A."/>
            <person name="Jonniaux J.-L."/>
            <person name="Karpfinger-Hartl L."/>
            <person name="Lanfranchi G."/>
            <person name="Lepingle A."/>
            <person name="Levesque H."/>
            <person name="Lyck R."/>
            <person name="Maftahi M."/>
            <person name="Mallet L."/>
            <person name="Maurer C.T.C."/>
            <person name="Messenguy F."/>
            <person name="Mewes H.-W."/>
            <person name="Moestl D."/>
            <person name="Nasr F."/>
            <person name="Nicaud J.-M."/>
            <person name="Niedenthal R.K."/>
            <person name="Pandolfo D."/>
            <person name="Pierard A."/>
            <person name="Piravandi E."/>
            <person name="Planta R.J."/>
            <person name="Pohl T.M."/>
            <person name="Purnelle B."/>
            <person name="Rebischung C."/>
            <person name="Remacha M.A."/>
            <person name="Revuelta J.L."/>
            <person name="Rinke M."/>
            <person name="Saiz J.E."/>
            <person name="Sartorello F."/>
            <person name="Scherens B."/>
            <person name="Sen-Gupta M."/>
            <person name="Soler-Mira A."/>
            <person name="Urbanus J.H.M."/>
            <person name="Valle G."/>
            <person name="Van Dyck L."/>
            <person name="Verhasselt P."/>
            <person name="Vierendeels F."/>
            <person name="Vissers S."/>
            <person name="Voet M."/>
            <person name="Volckaert G."/>
            <person name="Wach A."/>
            <person name="Wambutt R."/>
            <person name="Wedler H."/>
            <person name="Zollner A."/>
            <person name="Hani J."/>
        </authorList>
    </citation>
    <scope>NUCLEOTIDE SEQUENCE [LARGE SCALE GENOMIC DNA]</scope>
    <source>
        <strain>ATCC 204508 / S288c</strain>
    </source>
</reference>
<reference key="3">
    <citation type="journal article" date="2014" name="G3 (Bethesda)">
        <title>The reference genome sequence of Saccharomyces cerevisiae: Then and now.</title>
        <authorList>
            <person name="Engel S.R."/>
            <person name="Dietrich F.S."/>
            <person name="Fisk D.G."/>
            <person name="Binkley G."/>
            <person name="Balakrishnan R."/>
            <person name="Costanzo M.C."/>
            <person name="Dwight S.S."/>
            <person name="Hitz B.C."/>
            <person name="Karra K."/>
            <person name="Nash R.S."/>
            <person name="Weng S."/>
            <person name="Wong E.D."/>
            <person name="Lloyd P."/>
            <person name="Skrzypek M.S."/>
            <person name="Miyasato S.R."/>
            <person name="Simison M."/>
            <person name="Cherry J.M."/>
        </authorList>
    </citation>
    <scope>GENOME REANNOTATION</scope>
    <source>
        <strain>ATCC 204508 / S288c</strain>
    </source>
</reference>
<reference key="4">
    <citation type="submission" date="1996-03" db="EMBL/GenBank/DDBJ databases">
        <authorList>
            <person name="Sun Z."/>
            <person name="Hampsey M."/>
        </authorList>
    </citation>
    <scope>NUCLEOTIDE SEQUENCE [GENOMIC DNA]</scope>
</reference>
<reference key="5">
    <citation type="journal article" date="2003" name="Nature">
        <title>Sequencing and comparison of yeast species to identify genes and regulatory elements.</title>
        <authorList>
            <person name="Kellis M."/>
            <person name="Patterson N."/>
            <person name="Endrizzi M."/>
            <person name="Birren B.W."/>
            <person name="Lander E.S."/>
        </authorList>
    </citation>
    <scope>IDENTIFICATION OF PROBABLE INITIATION SITE</scope>
</reference>
<reference key="6">
    <citation type="journal article" date="1993" name="FEBS Lett.">
        <title>Isolation and characterization of autophagy-defective mutants of Saccharomyces cerevisiae.</title>
        <authorList>
            <person name="Tsukada M."/>
            <person name="Ohsumi Y."/>
        </authorList>
    </citation>
    <scope>FUNCTION</scope>
</reference>
<reference key="7">
    <citation type="journal article" date="1994" name="FEBS Lett.">
        <title>Isolation of autophagocytosis mutants of Saccharomyces cerevisiae.</title>
        <authorList>
            <person name="Thumm M."/>
            <person name="Egner R."/>
            <person name="Koch B."/>
            <person name="Schlumpberger M."/>
            <person name="Straub M."/>
            <person name="Veenhuis M."/>
            <person name="Wolf D.H."/>
        </authorList>
    </citation>
    <scope>FUNCTION</scope>
</reference>
<reference key="8">
    <citation type="journal article" date="1998" name="EMBO J.">
        <title>Aut2p and Aut7p, two novel microtubule-associated proteins are essential for delivery of autophagic vesicles to the vacuole.</title>
        <authorList>
            <person name="Lang T."/>
            <person name="Schaeffeler E."/>
            <person name="Bernreuther D."/>
            <person name="Bredschneider M."/>
            <person name="Wolf D.H."/>
            <person name="Thumm M."/>
        </authorList>
    </citation>
    <scope>FUNCTION</scope>
    <scope>INTERACTION WITH ATG8; TUB1 AND TUB2</scope>
</reference>
<reference key="9">
    <citation type="journal article" date="2000" name="J. Cell Biol.">
        <title>The reversible modification regulates the membrane-binding state of Apg8/Aut7 essential for autophagy and the cytoplasm to vacuole targeting pathway.</title>
        <authorList>
            <person name="Kirisako T."/>
            <person name="Ichimura Y."/>
            <person name="Okada H."/>
            <person name="Kabeya Y."/>
            <person name="Mizushima N."/>
            <person name="Yoshimori T."/>
            <person name="Ohsumi M."/>
            <person name="Takao T."/>
            <person name="Noda T."/>
            <person name="Ohsumi Y."/>
        </authorList>
    </citation>
    <scope>FUNCTION</scope>
    <scope>ACTIVITY REGULATION</scope>
    <scope>ACTIVE SITE</scope>
    <scope>MUTAGENESIS OF CYS-147</scope>
</reference>
<reference key="10">
    <citation type="journal article" date="2000" name="Nature">
        <title>A ubiquitin-like system mediates protein lipidation.</title>
        <authorList>
            <person name="Ichimura Y."/>
            <person name="Kirisako T."/>
            <person name="Takao T."/>
            <person name="Satomi Y."/>
            <person name="Shimonishi Y."/>
            <person name="Ishihara N."/>
            <person name="Mizushima N."/>
            <person name="Tanida I."/>
            <person name="Kominami E."/>
            <person name="Ohsumi M."/>
            <person name="Noda T."/>
            <person name="Ohsumi Y."/>
        </authorList>
    </citation>
    <scope>FUNCTION IN ATG8 CLEAVAGE</scope>
</reference>
<reference key="11">
    <citation type="journal article" date="2001" name="J. Cell Biol.">
        <title>Membrane recruitment of Aut7p in the autophagy and cytoplasm to vacuole targeting pathways requires Aut1p, Aut2p, and the autophagy conjugation complex.</title>
        <authorList>
            <person name="Kim J."/>
            <person name="Huang W.-P."/>
            <person name="Klionsky D.J."/>
        </authorList>
    </citation>
    <scope>FUNCTION</scope>
    <scope>SUBCELLULAR LOCATION</scope>
</reference>
<reference key="12">
    <citation type="journal article" date="2002" name="FEBS Lett.">
        <title>Starvation-induced degradation of yeast hexose transporter Hxt7p is dependent on endocytosis, autophagy and the terminal sequences of the permease.</title>
        <authorList>
            <person name="Krampe S."/>
            <person name="Boles E."/>
        </authorList>
    </citation>
    <scope>FUNCTION</scope>
</reference>
<reference key="13">
    <citation type="journal article" date="2003" name="Dev. Cell">
        <title>A unified nomenclature for yeast autophagy-related genes.</title>
        <authorList>
            <person name="Klionsky D.J."/>
            <person name="Cregg J.M."/>
            <person name="Dunn W.A. Jr."/>
            <person name="Emr S.D."/>
            <person name="Sakai Y."/>
            <person name="Sandoval I.V."/>
            <person name="Sibirny A."/>
            <person name="Subramani S."/>
            <person name="Thumm M."/>
            <person name="Veenhuis M."/>
            <person name="Ohsumi Y."/>
        </authorList>
    </citation>
    <scope>NOMENCLATURE</scope>
</reference>
<reference key="14">
    <citation type="journal article" date="2003" name="Nature">
        <title>Global analysis of protein localization in budding yeast.</title>
        <authorList>
            <person name="Huh W.-K."/>
            <person name="Falvo J.V."/>
            <person name="Gerke L.C."/>
            <person name="Carroll A.S."/>
            <person name="Howson R.W."/>
            <person name="Weissman J.S."/>
            <person name="O'Shea E.K."/>
        </authorList>
    </citation>
    <scope>SUBCELLULAR LOCATION [LARGE SCALE ANALYSIS]</scope>
</reference>
<reference key="15">
    <citation type="journal article" date="2003" name="Nature">
        <title>Global analysis of protein expression in yeast.</title>
        <authorList>
            <person name="Ghaemmaghami S."/>
            <person name="Huh W.-K."/>
            <person name="Bower K."/>
            <person name="Howson R.W."/>
            <person name="Belle A."/>
            <person name="Dephoure N."/>
            <person name="O'Shea E.K."/>
            <person name="Weissman J.S."/>
        </authorList>
    </citation>
    <scope>LEVEL OF PROTEIN EXPRESSION [LARGE SCALE ANALYSIS]</scope>
</reference>
<reference key="16">
    <citation type="journal article" date="2006" name="EMBO Rep.">
        <title>Two newly identified sites in the ubiquitin-like protein Atg8 are essential for autophagy.</title>
        <authorList>
            <person name="Amar N."/>
            <person name="Lustig G."/>
            <person name="Ichimura Y."/>
            <person name="Ohsumi Y."/>
            <person name="Elazar Z."/>
        </authorList>
    </citation>
    <scope>FUNCTION IN ATG8 CLEAVAGE</scope>
    <scope>INTERACTION WITH ATG8</scope>
</reference>
<reference key="17">
    <citation type="journal article" date="2007" name="Cell">
        <title>Atg8, a ubiquitin-like protein required for autophagosome formation, mediates membrane tethering and hemifusion.</title>
        <authorList>
            <person name="Nakatogawa H."/>
            <person name="Ichimura Y."/>
            <person name="Ohsumi Y."/>
        </authorList>
    </citation>
    <scope>FUNCTION IN ATG8 CLEAVAGE</scope>
</reference>
<reference key="18">
    <citation type="journal article" date="2008" name="J. Cell Biol.">
        <title>In vivo reconstitution of autophagy in Saccharomyces cerevisiae.</title>
        <authorList>
            <person name="Cao Y."/>
            <person name="Cheong H."/>
            <person name="Song H."/>
            <person name="Klionsky D.J."/>
        </authorList>
    </citation>
    <scope>FUNCTION IN ATG8 CLEAVAGE</scope>
</reference>
<reference key="19">
    <citation type="journal article" date="2008" name="Mol. Biol. Cell">
        <title>Piecemeal microautophagy of the nucleus requires the core macroautophagy genes.</title>
        <authorList>
            <person name="Krick R."/>
            <person name="Muehe Y."/>
            <person name="Prick T."/>
            <person name="Bremer S."/>
            <person name="Schlotterhose P."/>
            <person name="Eskelinen E.L."/>
            <person name="Millen J."/>
            <person name="Goldfarb D.S."/>
            <person name="Thumm M."/>
        </authorList>
    </citation>
    <scope>FUNCTION</scope>
</reference>
<reference key="20">
    <citation type="journal article" date="2008" name="Mol. Cell. Proteomics">
        <title>A multidimensional chromatography technology for in-depth phosphoproteome analysis.</title>
        <authorList>
            <person name="Albuquerque C.P."/>
            <person name="Smolka M.B."/>
            <person name="Payne S.H."/>
            <person name="Bafna V."/>
            <person name="Eng J."/>
            <person name="Zhou H."/>
        </authorList>
    </citation>
    <scope>PHOSPHORYLATION [LARGE SCALE ANALYSIS] AT SER-488</scope>
    <scope>IDENTIFICATION BY MASS SPECTROMETRY [LARGE SCALE ANALYSIS]</scope>
</reference>
<reference key="21">
    <citation type="journal article" date="2009" name="Science">
        <title>Global analysis of Cdk1 substrate phosphorylation sites provides insights into evolution.</title>
        <authorList>
            <person name="Holt L.J."/>
            <person name="Tuch B.B."/>
            <person name="Villen J."/>
            <person name="Johnson A.D."/>
            <person name="Gygi S.P."/>
            <person name="Morgan D.O."/>
        </authorList>
    </citation>
    <scope>PHOSPHORYLATION [LARGE SCALE ANALYSIS] AT SER-488</scope>
    <scope>IDENTIFICATION BY MASS SPECTROMETRY [LARGE SCALE ANALYSIS]</scope>
</reference>
<reference key="22">
    <citation type="journal article" date="2010" name="Autophagy">
        <title>Induction of autophagic flux by amino acid deprivation is distinct from nitrogen starvation-induced macroautophagy.</title>
        <authorList>
            <person name="Ecker N."/>
            <person name="Mor A."/>
            <person name="Journo D."/>
            <person name="Abeliovich H."/>
        </authorList>
    </citation>
    <scope>INDUCTION</scope>
</reference>
<reference key="23">
    <citation type="journal article" date="2012" name="Autophagy">
        <title>Atg4 recycles inappropriately lipidated Atg8 to promote autophagosome biogenesis.</title>
        <authorList>
            <person name="Nakatogawa H."/>
            <person name="Ishii J."/>
            <person name="Asai E."/>
            <person name="Ohsumi Y."/>
        </authorList>
    </citation>
    <scope>FUNCTION IN ATG8-PE DECONJUGATION</scope>
    <scope>CATALYTIC ACTIVITY</scope>
</reference>
<reference key="24">
    <citation type="journal article" date="2012" name="Autophagy">
        <title>Dual roles of Atg8-PE deconjugation by Atg4 in autophagy.</title>
        <authorList>
            <person name="Yu Z.Q."/>
            <person name="Ni T."/>
            <person name="Hong B."/>
            <person name="Wang H.Y."/>
            <person name="Jiang F.J."/>
            <person name="Zou S."/>
            <person name="Chen Y."/>
            <person name="Zheng X.L."/>
            <person name="Klionsky D.J."/>
            <person name="Liang Y."/>
            <person name="Xie Z."/>
        </authorList>
    </citation>
    <scope>FUNCTION IN ATG8-PE DECONJUGATION</scope>
    <scope>CATALYTIC ACTIVITY</scope>
</reference>
<reference key="25">
    <citation type="journal article" date="2014" name="Autophagy">
        <title>The yeast autophagy protease Atg4 is regulated by thioredoxin.</title>
        <authorList>
            <person name="Perez-Perez M.E."/>
            <person name="Zaffagnini M."/>
            <person name="Marchand C.H."/>
            <person name="Crespo J.L."/>
            <person name="Lemaire S.D."/>
        </authorList>
    </citation>
    <scope>DISULFIDE BOND</scope>
    <scope>SUBCELLULAR LOCATION</scope>
    <scope>MUTAGENESIS OF CYS-338 AND CYS-394</scope>
</reference>
<reference key="26">
    <citation type="journal article" date="2017" name="Autophagy">
        <title>ATG4B contains a C-terminal LIR motif important for binding and efficient cleavage of mammalian orthologs of yeast Atg8.</title>
        <authorList>
            <person name="Skytte Rasmussen M."/>
            <person name="Mouilleron S."/>
            <person name="Kumar Shrestha B."/>
            <person name="Wirth M."/>
            <person name="Lee R."/>
            <person name="Bowitz Larsen K."/>
            <person name="Abudu Princely Y."/>
            <person name="O'Reilly N."/>
            <person name="Sjottem E."/>
            <person name="Tooze S.A."/>
            <person name="Lamark T."/>
            <person name="Johansen T."/>
        </authorList>
    </citation>
    <scope>MOTIF</scope>
    <scope>DOMAIN</scope>
    <scope>INTERACTION WITH ATG8</scope>
    <scope>MUTAGENESIS OF 343-PHE--LEU-346; 424-TYR--ILE-427 AND 446-PHE--ILE-449</scope>
</reference>
<reference key="27">
    <citation type="journal article" date="2017" name="EMBO Rep.">
        <title>Conserved Atg8 recognition sites mediate Atg4 association with autophagosomal membranes and Atg8 deconjugation.</title>
        <authorList>
            <person name="Abreu S."/>
            <person name="Kriegenburg F."/>
            <person name="Gomez-Sanchez R."/>
            <person name="Mari M."/>
            <person name="Sanchez-Wandelmer J."/>
            <person name="Skytte Rasmussen M."/>
            <person name="Soares Guimaraes R."/>
            <person name="Zens B."/>
            <person name="Schuschnig M."/>
            <person name="Hardenberg R."/>
            <person name="Peter M."/>
            <person name="Johansen T."/>
            <person name="Kraft C."/>
            <person name="Martens S."/>
            <person name="Reggiori F."/>
        </authorList>
    </citation>
    <scope>FUNCTION</scope>
    <scope>SUBCELLULAR LOCATION</scope>
    <scope>DOMAIN</scope>
    <scope>MUTAGENESIS OF 36-TYR--LEU-39; 102-PHE--ILE-105; 424-TYR--ILE-427 AND 446-PHE--ILE-449</scope>
</reference>
<reference key="28">
    <citation type="journal article" date="2017" name="Nat. Commun.">
        <title>Atg4 proteolytic activity can be inhibited by Atg1 phosphorylation.</title>
        <authorList>
            <person name="Sanchez-Wandelmer J."/>
            <person name="Kriegenburg F."/>
            <person name="Rohringer S."/>
            <person name="Schuschnig M."/>
            <person name="Gomez-Sanchez R."/>
            <person name="Zens B."/>
            <person name="Abreu S."/>
            <person name="Hardenberg R."/>
            <person name="Hollenstein D."/>
            <person name="Gao J."/>
            <person name="Ungermann C."/>
            <person name="Martens S."/>
            <person name="Kraft C."/>
            <person name="Reggiori F."/>
        </authorList>
    </citation>
    <scope>PHOSPHORYLATION AT SER-307</scope>
    <scope>FUNCTION</scope>
    <scope>SUBCELLULAR LOCATION</scope>
    <scope>INTERACTION WITH ATG8</scope>
    <scope>MUTAGENESIS OF 305-SER--SER-307 AND SER-307</scope>
</reference>
<reference key="29">
    <citation type="journal article" date="2017" name="PLoS ONE">
        <title>Atg4 plays an important role in efficient expansion of autophagic isolation membranes by cleaving lipidated Atg8 in Saccharomyces cerevisiae.</title>
        <authorList>
            <person name="Hirata E."/>
            <person name="Ohya Y."/>
            <person name="Suzuki K."/>
        </authorList>
    </citation>
    <scope>FUNCTION</scope>
    <scope>INTERACTION WITH ATG8</scope>
</reference>
<reference key="30">
    <citation type="journal article" date="2019" name="J. Cell Sci.">
        <title>The mitochondrial phosphatidylserine decarboxylase Psd1 is involved in nitrogen starvation-induced mitophagy in yeast.</title>
        <authorList>
            <person name="Vigie P."/>
            <person name="Cougouilles E."/>
            <person name="Bhatia-Kissova I."/>
            <person name="Salin B."/>
            <person name="Blancard C."/>
            <person name="Camougrand N."/>
        </authorList>
    </citation>
    <scope>SUBCELLULAR LOCATION</scope>
</reference>
<organism>
    <name type="scientific">Saccharomyces cerevisiae (strain ATCC 204508 / S288c)</name>
    <name type="common">Baker's yeast</name>
    <dbReference type="NCBI Taxonomy" id="559292"/>
    <lineage>
        <taxon>Eukaryota</taxon>
        <taxon>Fungi</taxon>
        <taxon>Dikarya</taxon>
        <taxon>Ascomycota</taxon>
        <taxon>Saccharomycotina</taxon>
        <taxon>Saccharomycetes</taxon>
        <taxon>Saccharomycetales</taxon>
        <taxon>Saccharomycetaceae</taxon>
        <taxon>Saccharomyces</taxon>
    </lineage>
</organism>
<name>ATG4_YEAST</name>
<accession>P53867</accession>
<accession>D6W0W7</accession>
<dbReference type="EC" id="3.4.22.-" evidence="2 3 8 9 11"/>
<dbReference type="EMBL" id="Z69381">
    <property type="protein sequence ID" value="CAA93375.1"/>
    <property type="status" value="ALT_INIT"/>
    <property type="molecule type" value="Genomic_DNA"/>
</dbReference>
<dbReference type="EMBL" id="Z71499">
    <property type="protein sequence ID" value="CAA96126.1"/>
    <property type="status" value="ALT_INIT"/>
    <property type="molecule type" value="Genomic_DNA"/>
</dbReference>
<dbReference type="EMBL" id="U20390">
    <property type="protein sequence ID" value="AAA86498.1"/>
    <property type="molecule type" value="Genomic_DNA"/>
</dbReference>
<dbReference type="EMBL" id="BK006947">
    <property type="protein sequence ID" value="DAA10333.1"/>
    <property type="molecule type" value="Genomic_DNA"/>
</dbReference>
<dbReference type="PIR" id="S63181">
    <property type="entry name" value="S63181"/>
</dbReference>
<dbReference type="RefSeq" id="NP_014176.2">
    <property type="nucleotide sequence ID" value="NM_001183061.1"/>
</dbReference>
<dbReference type="SMR" id="P53867"/>
<dbReference type="BioGRID" id="35613">
    <property type="interactions" value="89"/>
</dbReference>
<dbReference type="DIP" id="DIP-2339N"/>
<dbReference type="FunCoup" id="P53867">
    <property type="interactions" value="379"/>
</dbReference>
<dbReference type="IntAct" id="P53867">
    <property type="interactions" value="5"/>
</dbReference>
<dbReference type="STRING" id="4932.YNL223W"/>
<dbReference type="MEROPS" id="C54.001"/>
<dbReference type="iPTMnet" id="P53867"/>
<dbReference type="PaxDb" id="4932-YNL223W"/>
<dbReference type="PeptideAtlas" id="P53867"/>
<dbReference type="EnsemblFungi" id="YNL223W_mRNA">
    <property type="protein sequence ID" value="YNL223W"/>
    <property type="gene ID" value="YNL223W"/>
</dbReference>
<dbReference type="GeneID" id="855498"/>
<dbReference type="KEGG" id="sce:YNL223W"/>
<dbReference type="AGR" id="SGD:S000005167"/>
<dbReference type="SGD" id="S000005167">
    <property type="gene designation" value="ATG4"/>
</dbReference>
<dbReference type="VEuPathDB" id="FungiDB:YNL223W"/>
<dbReference type="eggNOG" id="KOG2674">
    <property type="taxonomic scope" value="Eukaryota"/>
</dbReference>
<dbReference type="GeneTree" id="ENSGT00530000063000"/>
<dbReference type="HOGENOM" id="CLU_021259_5_3_1"/>
<dbReference type="InParanoid" id="P53867"/>
<dbReference type="OMA" id="PDETFHC"/>
<dbReference type="OrthoDB" id="2960936at2759"/>
<dbReference type="BioCyc" id="YEAST:G3O-33226-MONOMER"/>
<dbReference type="BioGRID-ORCS" id="855498">
    <property type="hits" value="0 hits in 10 CRISPR screens"/>
</dbReference>
<dbReference type="PRO" id="PR:P53867"/>
<dbReference type="Proteomes" id="UP000002311">
    <property type="component" value="Chromosome XIV"/>
</dbReference>
<dbReference type="RNAct" id="P53867">
    <property type="molecule type" value="protein"/>
</dbReference>
<dbReference type="GO" id="GO:0005737">
    <property type="term" value="C:cytoplasm"/>
    <property type="evidence" value="ECO:0000314"/>
    <property type="project" value="UniProtKB"/>
</dbReference>
<dbReference type="GO" id="GO:0005829">
    <property type="term" value="C:cytosol"/>
    <property type="evidence" value="ECO:0000314"/>
    <property type="project" value="UniProtKB"/>
</dbReference>
<dbReference type="GO" id="GO:0005739">
    <property type="term" value="C:mitochondrion"/>
    <property type="evidence" value="ECO:0000314"/>
    <property type="project" value="UniProtKB"/>
</dbReference>
<dbReference type="GO" id="GO:0005634">
    <property type="term" value="C:nucleus"/>
    <property type="evidence" value="ECO:0000314"/>
    <property type="project" value="SGD"/>
</dbReference>
<dbReference type="GO" id="GO:0000407">
    <property type="term" value="C:phagophore assembly site"/>
    <property type="evidence" value="ECO:0007669"/>
    <property type="project" value="UniProtKB-SubCell"/>
</dbReference>
<dbReference type="GO" id="GO:0004197">
    <property type="term" value="F:cysteine-type endopeptidase activity"/>
    <property type="evidence" value="ECO:0000318"/>
    <property type="project" value="GO_Central"/>
</dbReference>
<dbReference type="GO" id="GO:0019786">
    <property type="term" value="F:protein-phosphatidylethanolamide deconjugating activity"/>
    <property type="evidence" value="ECO:0000314"/>
    <property type="project" value="SGD"/>
</dbReference>
<dbReference type="GO" id="GO:0035973">
    <property type="term" value="P:aggrephagy"/>
    <property type="evidence" value="ECO:0000318"/>
    <property type="project" value="GO_Central"/>
</dbReference>
<dbReference type="GO" id="GO:0000045">
    <property type="term" value="P:autophagosome assembly"/>
    <property type="evidence" value="ECO:0000315"/>
    <property type="project" value="UniProtKB"/>
</dbReference>
<dbReference type="GO" id="GO:0006914">
    <property type="term" value="P:autophagy"/>
    <property type="evidence" value="ECO:0000315"/>
    <property type="project" value="UniProtKB"/>
</dbReference>
<dbReference type="GO" id="GO:0000422">
    <property type="term" value="P:autophagy of mitochondrion"/>
    <property type="evidence" value="ECO:0000315"/>
    <property type="project" value="SGD"/>
</dbReference>
<dbReference type="GO" id="GO:0032258">
    <property type="term" value="P:cytoplasm to vacuole targeting by the Cvt pathway"/>
    <property type="evidence" value="ECO:0000315"/>
    <property type="project" value="SGD"/>
</dbReference>
<dbReference type="GO" id="GO:0000423">
    <property type="term" value="P:mitophagy"/>
    <property type="evidence" value="ECO:0000318"/>
    <property type="project" value="GO_Central"/>
</dbReference>
<dbReference type="GO" id="GO:0044804">
    <property type="term" value="P:nucleophagy"/>
    <property type="evidence" value="ECO:0000315"/>
    <property type="project" value="SGD"/>
</dbReference>
<dbReference type="GO" id="GO:0034727">
    <property type="term" value="P:piecemeal microautophagy of the nucleus"/>
    <property type="evidence" value="ECO:0000315"/>
    <property type="project" value="SGD"/>
</dbReference>
<dbReference type="GO" id="GO:0016485">
    <property type="term" value="P:protein processing"/>
    <property type="evidence" value="ECO:0000318"/>
    <property type="project" value="GO_Central"/>
</dbReference>
<dbReference type="GO" id="GO:0006612">
    <property type="term" value="P:protein targeting to membrane"/>
    <property type="evidence" value="ECO:0000315"/>
    <property type="project" value="UniProtKB"/>
</dbReference>
<dbReference type="GO" id="GO:0006508">
    <property type="term" value="P:proteolysis"/>
    <property type="evidence" value="ECO:0000315"/>
    <property type="project" value="UniProtKB"/>
</dbReference>
<dbReference type="InterPro" id="IPR038765">
    <property type="entry name" value="Papain-like_cys_pep_sf"/>
</dbReference>
<dbReference type="InterPro" id="IPR005078">
    <property type="entry name" value="Peptidase_C54"/>
</dbReference>
<dbReference type="InterPro" id="IPR046792">
    <property type="entry name" value="Peptidase_C54_cat"/>
</dbReference>
<dbReference type="PANTHER" id="PTHR22624:SF49">
    <property type="entry name" value="CYSTEINE PROTEASE"/>
    <property type="match status" value="1"/>
</dbReference>
<dbReference type="PANTHER" id="PTHR22624">
    <property type="entry name" value="CYSTEINE PROTEASE ATG4"/>
    <property type="match status" value="1"/>
</dbReference>
<dbReference type="Pfam" id="PF03416">
    <property type="entry name" value="Peptidase_C54"/>
    <property type="match status" value="1"/>
</dbReference>
<dbReference type="SUPFAM" id="SSF54001">
    <property type="entry name" value="Cysteine proteinases"/>
    <property type="match status" value="1"/>
</dbReference>
<sequence>MQRWLQLWKMDLVQKVSHGVFEGSSEEPAALMNHDYIVLGEVYPERDEESGAEQCEQDCRYRGEAVSDGFLSSLFGREISSYTKEFLLDVQSRVNFTYRTRFVPIARAPDGPSPLSLNLLVRTNPISTIEDYIANPDCFNTDIGWGCMIRTGQSLLGNALQILHLGRDFRVNGNESLERESKFVNWFNDTPEAPFSLHNFVSAGTELSDKRPGEWFGPAATARSIQSLIYGFPECGIDDCIVSVSSGDIYENEVEKVFAENPNSRILFLLGVKLGINAVNESYRESICGILSSTQSVGIAGGRPSSSLYFFGYQGNEFLHFDPHIPQPAVEDSFVESCHTSKFGKLQLSEMDPSMLIGILIKGEKDWQQWKLEVAESAIINVLAKRMDDFDVSCSMDDVESVSSNSMKKDASNNENLGVLEGDYVDIGAIFPHTTNTEDVDEYDCFQDIHCKKQKIVVMGNTHTVNANLTDYEVEGVLVEKETVGIHSPIDEKC</sequence>
<protein>
    <recommendedName>
        <fullName evidence="27">Cysteine protease ATG4</fullName>
        <ecNumber evidence="2 3 8 9 11">3.4.22.-</ecNumber>
    </recommendedName>
    <alternativeName>
        <fullName evidence="26">Autophagy-related protein 4</fullName>
    </alternativeName>
</protein>
<gene>
    <name evidence="24 29" type="primary">ATG4</name>
    <name evidence="26" type="synonym">APG4</name>
    <name evidence="25" type="synonym">AUT2</name>
    <name type="ordered locus">YNL223W</name>
    <name type="ORF">N1274</name>
</gene>
<feature type="chain" id="PRO_0000215870" description="Cysteine protease ATG4">
    <location>
        <begin position="1"/>
        <end position="494"/>
    </location>
</feature>
<feature type="short sequence motif" description="APEAR" evidence="17">
    <location>
        <begin position="102"/>
        <end position="105"/>
    </location>
</feature>
<feature type="short sequence motif" description="LIR" evidence="16 17">
    <location>
        <begin position="424"/>
        <end position="427"/>
    </location>
</feature>
<feature type="active site" description="Nucleophile" evidence="28">
    <location>
        <position position="147"/>
    </location>
</feature>
<feature type="active site" evidence="1">
    <location>
        <position position="322"/>
    </location>
</feature>
<feature type="active site" evidence="1">
    <location>
        <position position="324"/>
    </location>
</feature>
<feature type="modified residue" description="Phosphoserine; by ATG1" evidence="19">
    <location>
        <position position="307"/>
    </location>
</feature>
<feature type="modified residue" description="Phosphoserine" evidence="30 31">
    <location>
        <position position="488"/>
    </location>
</feature>
<feature type="disulfide bond" evidence="15">
    <location>
        <begin position="338"/>
        <end position="394"/>
    </location>
</feature>
<feature type="mutagenesis site" description="Impaired autophagy." evidence="17">
    <original>YIVL</original>
    <variation>AIVA</variation>
    <location>
        <begin position="36"/>
        <end position="39"/>
    </location>
</feature>
<feature type="mutagenesis site" description="Impaired autophagy caused by decreased delipdation of ATG8. Reduced recruitment to preautophagosomal structures." evidence="17">
    <original>FVPI</original>
    <variation>AVPA</variation>
    <location>
        <begin position="102"/>
        <end position="105"/>
    </location>
</feature>
<feature type="mutagenesis site" description="Abolishes the proteolytic activity and decreases autophagy." evidence="2">
    <original>C</original>
    <variation>S</variation>
    <variation>A</variation>
    <location>
        <position position="147"/>
    </location>
</feature>
<feature type="mutagenesis site" description="Abolished phosphorylation by ATG1." evidence="19">
    <original>SSS</original>
    <variation>AAA</variation>
    <location>
        <begin position="305"/>
        <end position="307"/>
    </location>
</feature>
<feature type="mutagenesis site" description="Abolished phosphorylation by ATG1, leading to increased interaction with ATG8." evidence="19">
    <original>S</original>
    <variation>A</variation>
    <location>
        <position position="307"/>
    </location>
</feature>
<feature type="mutagenesis site" description="Phospho-mimetic mutant; decreased integration with ATG8, leading to impaired decreased delipdation of ATG8." evidence="19">
    <original>S</original>
    <variation>D</variation>
    <location>
        <position position="307"/>
    </location>
</feature>
<feature type="mutagenesis site" description="Increased recruitmentto the phagophore assembly site." evidence="15">
    <original>C</original>
    <variation>S</variation>
    <location>
        <position position="338"/>
    </location>
</feature>
<feature type="mutagenesis site" description="Does not affect interaction with ATG8." evidence="16">
    <original>FGKL</original>
    <variation>AGKA</variation>
    <location>
        <begin position="343"/>
        <end position="346"/>
    </location>
</feature>
<feature type="mutagenesis site" description="Increased recruitmentto the phagophore assembly site." evidence="15">
    <original>C</original>
    <variation>S</variation>
    <location>
        <position position="394"/>
    </location>
</feature>
<feature type="mutagenesis site" description="Decreased autophagy caused by strongly reduced interaction with ATG8." evidence="16 17">
    <original>YVDI</original>
    <variation>AVDA</variation>
    <location>
        <begin position="424"/>
        <end position="427"/>
    </location>
</feature>
<feature type="mutagenesis site" description="Does not affect autophagy. Slightly decreased interaction with ATG8." evidence="16 17">
    <original>FQDI</original>
    <variation>AQDA</variation>
    <location>
        <begin position="446"/>
        <end position="449"/>
    </location>
</feature>
<proteinExistence type="evidence at protein level"/>
<keyword id="KW-0072">Autophagy</keyword>
<keyword id="KW-0963">Cytoplasm</keyword>
<keyword id="KW-1015">Disulfide bond</keyword>
<keyword id="KW-0378">Hydrolase</keyword>
<keyword id="KW-1017">Isopeptide bond</keyword>
<keyword id="KW-0496">Mitochondrion</keyword>
<keyword id="KW-0539">Nucleus</keyword>
<keyword id="KW-0597">Phosphoprotein</keyword>
<keyword id="KW-0645">Protease</keyword>
<keyword id="KW-0653">Protein transport</keyword>
<keyword id="KW-1185">Reference proteome</keyword>
<keyword id="KW-0788">Thiol protease</keyword>
<keyword id="KW-0813">Transport</keyword>
<keyword id="KW-0833">Ubl conjugation pathway</keyword>
<evidence type="ECO:0000250" key="1">
    <source>
        <dbReference type="UniProtKB" id="Q9Y4P1"/>
    </source>
</evidence>
<evidence type="ECO:0000269" key="2">
    <source>
    </source>
</evidence>
<evidence type="ECO:0000269" key="3">
    <source>
    </source>
</evidence>
<evidence type="ECO:0000269" key="4">
    <source>
    </source>
</evidence>
<evidence type="ECO:0000269" key="5">
    <source>
    </source>
</evidence>
<evidence type="ECO:0000269" key="6">
    <source>
    </source>
</evidence>
<evidence type="ECO:0000269" key="7">
    <source>
    </source>
</evidence>
<evidence type="ECO:0000269" key="8">
    <source>
    </source>
</evidence>
<evidence type="ECO:0000269" key="9">
    <source>
    </source>
</evidence>
<evidence type="ECO:0000269" key="10">
    <source>
    </source>
</evidence>
<evidence type="ECO:0000269" key="11">
    <source>
    </source>
</evidence>
<evidence type="ECO:0000269" key="12">
    <source>
    </source>
</evidence>
<evidence type="ECO:0000269" key="13">
    <source>
    </source>
</evidence>
<evidence type="ECO:0000269" key="14">
    <source>
    </source>
</evidence>
<evidence type="ECO:0000269" key="15">
    <source>
    </source>
</evidence>
<evidence type="ECO:0000269" key="16">
    <source>
    </source>
</evidence>
<evidence type="ECO:0000269" key="17">
    <source>
    </source>
</evidence>
<evidence type="ECO:0000269" key="18">
    <source>
    </source>
</evidence>
<evidence type="ECO:0000269" key="19">
    <source>
    </source>
</evidence>
<evidence type="ECO:0000269" key="20">
    <source>
    </source>
</evidence>
<evidence type="ECO:0000269" key="21">
    <source>
    </source>
</evidence>
<evidence type="ECO:0000269" key="22">
    <source>
    </source>
</evidence>
<evidence type="ECO:0000269" key="23">
    <source>
    </source>
</evidence>
<evidence type="ECO:0000303" key="24">
    <source>
    </source>
</evidence>
<evidence type="ECO:0000303" key="25">
    <source>
    </source>
</evidence>
<evidence type="ECO:0000303" key="26">
    <source>
    </source>
</evidence>
<evidence type="ECO:0000305" key="27"/>
<evidence type="ECO:0000305" key="28">
    <source>
    </source>
</evidence>
<evidence type="ECO:0000312" key="29">
    <source>
        <dbReference type="SGD" id="S000005167"/>
    </source>
</evidence>
<evidence type="ECO:0007744" key="30">
    <source>
    </source>
</evidence>
<evidence type="ECO:0007744" key="31">
    <source>
    </source>
</evidence>